<keyword id="KW-1003">Cell membrane</keyword>
<keyword id="KW-0193">Cuticle</keyword>
<keyword id="KW-1015">Disulfide bond</keyword>
<keyword id="KW-0472">Membrane</keyword>
<keyword id="KW-1185">Reference proteome</keyword>
<keyword id="KW-0677">Repeat</keyword>
<keyword id="KW-0964">Secreted</keyword>
<keyword id="KW-0732">Signal</keyword>
<keyword id="KW-0812">Transmembrane</keyword>
<keyword id="KW-1133">Transmembrane helix</keyword>
<evidence type="ECO:0000250" key="1"/>
<evidence type="ECO:0000255" key="2"/>
<evidence type="ECO:0000255" key="3">
    <source>
        <dbReference type="PROSITE-ProRule" id="PRU00375"/>
    </source>
</evidence>
<evidence type="ECO:0000269" key="4">
    <source>
    </source>
</evidence>
<evidence type="ECO:0000269" key="5">
    <source>
    </source>
</evidence>
<evidence type="ECO:0000269" key="6">
    <source>
    </source>
</evidence>
<evidence type="ECO:0000303" key="7">
    <source>
    </source>
</evidence>
<evidence type="ECO:0000305" key="8"/>
<evidence type="ECO:0000305" key="9">
    <source>
    </source>
</evidence>
<evidence type="ECO:0000305" key="10">
    <source>
    </source>
</evidence>
<evidence type="ECO:0000312" key="11">
    <source>
        <dbReference type="WormBase" id="C47G2.1"/>
    </source>
</evidence>
<organism>
    <name type="scientific">Caenorhabditis elegans</name>
    <dbReference type="NCBI Taxonomy" id="6239"/>
    <lineage>
        <taxon>Eukaryota</taxon>
        <taxon>Metazoa</taxon>
        <taxon>Ecdysozoa</taxon>
        <taxon>Nematoda</taxon>
        <taxon>Chromadorea</taxon>
        <taxon>Rhabditida</taxon>
        <taxon>Rhabditina</taxon>
        <taxon>Rhabditomorpha</taxon>
        <taxon>Rhabditoidea</taxon>
        <taxon>Rhabditidae</taxon>
        <taxon>Peloderinae</taxon>
        <taxon>Caenorhabditis</taxon>
    </lineage>
</organism>
<name>CUT1_CAEEL</name>
<sequence length="424" mass="45168">MTWKPIICLAALVLSASAIPVDNNVEGEPEVECGPNSITVNFNTRNPFEGHVYVKGLYDQAGCRSDEGGRQVAGIELPFDSCNTARTRSLNPKGVFVSTTVVISFHPQFVTKVDRAYRIQCFYMESDKTVSTQIEVSDLTTAFQTQVVPMPVCKYEILDGGPSGQPIQFATIGQQVYHKWTCDSETTDTFCAVVHSCTVDDGNGDTVQILNEEGCALDKFLLNNLEYPTDLMAGQEAHVYKYADRSQLFYQCQISITIKDPGSECARPTCSEPQGFGAVKQAGAGGAHAAAAPQAGVEEVQAAPVAAAAPVAAPVAAAAAAPAVPRATLAQLRLLRKKRSFGENEGILDVRVEINTLDIMEGASPSAPEAAALVSEESVRRRATSTGICLTPIGFASFLGIGTIVATALSATIFYVARPTSHKH</sequence>
<feature type="signal peptide" evidence="2">
    <location>
        <begin position="1"/>
        <end position="18"/>
    </location>
</feature>
<feature type="chain" id="PRO_0000041747" description="Cuticlin-1">
    <location>
        <begin position="19"/>
        <end position="424"/>
    </location>
</feature>
<feature type="topological domain" description="Extracellular" evidence="8">
    <location>
        <begin position="19"/>
        <end position="392"/>
    </location>
</feature>
<feature type="transmembrane region" description="Helical" evidence="2">
    <location>
        <begin position="393"/>
        <end position="413"/>
    </location>
</feature>
<feature type="topological domain" description="Cytoplasmic" evidence="8">
    <location>
        <begin position="414"/>
        <end position="424"/>
    </location>
</feature>
<feature type="domain" description="ZP" evidence="3">
    <location>
        <begin position="32"/>
        <end position="277"/>
    </location>
</feature>
<feature type="repeat" description="1" evidence="10">
    <location>
        <begin position="302"/>
        <end position="305"/>
    </location>
</feature>
<feature type="repeat" description="2" evidence="10">
    <location>
        <begin position="307"/>
        <end position="311"/>
    </location>
</feature>
<feature type="repeat" description="3" evidence="10">
    <location>
        <begin position="312"/>
        <end position="315"/>
    </location>
</feature>
<feature type="repeat" description="4" evidence="10">
    <location>
        <begin position="320"/>
        <end position="323"/>
    </location>
</feature>
<feature type="region of interest" description="4 X 4 AA repeats of A-A-P-[AVI]" evidence="10">
    <location>
        <begin position="302"/>
        <end position="323"/>
    </location>
</feature>
<feature type="disulfide bond" evidence="1">
    <location>
        <begin position="197"/>
        <end position="252"/>
    </location>
</feature>
<feature type="sequence conflict" description="In Ref. 1; AAA27995." evidence="8" ref="1">
    <original>GEP</original>
    <variation>PEG</variation>
    <location>
        <begin position="27"/>
        <end position="29"/>
    </location>
</feature>
<feature type="sequence conflict" description="In Ref. 1; AAA27995." evidence="8" ref="1">
    <original>AA</original>
    <variation>G</variation>
    <location>
        <begin position="306"/>
        <end position="307"/>
    </location>
</feature>
<feature type="sequence conflict" description="In Ref. 1; AAA27995." evidence="8" ref="1">
    <original>CL</original>
    <variation>SS</variation>
    <location>
        <begin position="389"/>
        <end position="390"/>
    </location>
</feature>
<feature type="sequence conflict" description="In Ref. 1; AAA27995." evidence="8" ref="1">
    <original>FA</original>
    <variation>LP</variation>
    <location>
        <begin position="395"/>
        <end position="396"/>
    </location>
</feature>
<feature type="sequence conflict" description="In Ref. 1; AAA27995." evidence="8" ref="1">
    <original>IG</original>
    <variation>MR</variation>
    <location>
        <begin position="401"/>
        <end position="402"/>
    </location>
</feature>
<proteinExistence type="evidence at transcript level"/>
<comment type="function">
    <text evidence="4 5 6 10">Component of the cuticles, which contributes to the formation of extracellular envelopes protecting the organism from the environment (Probable) (PubMed:1864469). Plays a role in alae formation in dauer larvae (PubMed:15936343, PubMed:30409788).</text>
</comment>
<comment type="subcellular location">
    <subcellularLocation>
        <location evidence="2">Cell membrane</location>
        <topology evidence="8">Single-pass type I membrane protein</topology>
    </subcellularLocation>
    <subcellularLocation>
        <location evidence="9">Secreted</location>
    </subcellularLocation>
</comment>
<comment type="developmental stage">
    <text evidence="4 5">Expressed in head and tail seam cells during dauer larva formation (PubMed:15936343, PubMed:1864469). In dauer phase larvae, expressed in two ribbons approximately 2 microns wide running along the lateral lines underneath the alae (PubMed:1864469). Not expressed in late embryogenesis or adults (PubMed:15936343).</text>
</comment>
<comment type="domain">
    <text evidence="10">The small repeats A-A-P-[AVI] are also present in many proteins constituting the protective envelope of other species.</text>
</comment>
<comment type="disruption phenotype">
    <text evidence="4">RNAi-mediated knockdown results in no alae in dauer stage larvae, which results in a wider lateral cuticle and larger body diameter.</text>
</comment>
<comment type="sequence caution" evidence="8">
    <conflict type="erroneous initiation">
        <sequence resource="EMBL-CDS" id="AAA27995"/>
    </conflict>
</comment>
<gene>
    <name evidence="7 11" type="primary">cut-1</name>
    <name evidence="11" type="ORF">C47G2.1</name>
</gene>
<dbReference type="EMBL" id="M55997">
    <property type="protein sequence ID" value="AAA27995.1"/>
    <property type="status" value="ALT_INIT"/>
    <property type="molecule type" value="Genomic_DNA"/>
</dbReference>
<dbReference type="EMBL" id="BX284602">
    <property type="protein sequence ID" value="CAA88934.1"/>
    <property type="molecule type" value="Genomic_DNA"/>
</dbReference>
<dbReference type="PIR" id="A49772">
    <property type="entry name" value="A49772"/>
</dbReference>
<dbReference type="PIR" id="T20032">
    <property type="entry name" value="T20032"/>
</dbReference>
<dbReference type="RefSeq" id="NP_496410.1">
    <property type="nucleotide sequence ID" value="NM_064009.4"/>
</dbReference>
<dbReference type="BioGRID" id="40028">
    <property type="interactions" value="1"/>
</dbReference>
<dbReference type="FunCoup" id="Q03755">
    <property type="interactions" value="111"/>
</dbReference>
<dbReference type="IntAct" id="Q03755">
    <property type="interactions" value="1"/>
</dbReference>
<dbReference type="STRING" id="6239.C47G2.1.1"/>
<dbReference type="PaxDb" id="6239-C47G2.1"/>
<dbReference type="PeptideAtlas" id="Q03755"/>
<dbReference type="EnsemblMetazoa" id="C47G2.1.1">
    <property type="protein sequence ID" value="C47G2.1.1"/>
    <property type="gene ID" value="WBGene00000851"/>
</dbReference>
<dbReference type="GeneID" id="174720"/>
<dbReference type="KEGG" id="cel:CELE_C47G2.1"/>
<dbReference type="UCSC" id="C47G2.1">
    <property type="organism name" value="c. elegans"/>
</dbReference>
<dbReference type="AGR" id="WB:WBGene00000851"/>
<dbReference type="CTD" id="174720"/>
<dbReference type="WormBase" id="C47G2.1">
    <property type="protein sequence ID" value="CE02165"/>
    <property type="gene ID" value="WBGene00000851"/>
    <property type="gene designation" value="cut-1"/>
</dbReference>
<dbReference type="eggNOG" id="ENOG502QV41">
    <property type="taxonomic scope" value="Eukaryota"/>
</dbReference>
<dbReference type="GeneTree" id="ENSGT00940000163650"/>
<dbReference type="HOGENOM" id="CLU_037896_1_1_1"/>
<dbReference type="InParanoid" id="Q03755"/>
<dbReference type="OMA" id="VRVEINT"/>
<dbReference type="OrthoDB" id="6139674at2759"/>
<dbReference type="PhylomeDB" id="Q03755"/>
<dbReference type="PRO" id="PR:Q03755"/>
<dbReference type="Proteomes" id="UP000001940">
    <property type="component" value="Chromosome II"/>
</dbReference>
<dbReference type="Bgee" id="WBGene00000851">
    <property type="expression patterns" value="Expressed in material anatomical entity and 1 other cell type or tissue"/>
</dbReference>
<dbReference type="GO" id="GO:0060102">
    <property type="term" value="C:cuticular extracellular matrix"/>
    <property type="evidence" value="ECO:0000314"/>
    <property type="project" value="WormBase"/>
</dbReference>
<dbReference type="GO" id="GO:0005576">
    <property type="term" value="C:extracellular region"/>
    <property type="evidence" value="ECO:0007669"/>
    <property type="project" value="UniProtKB-SubCell"/>
</dbReference>
<dbReference type="GO" id="GO:0005886">
    <property type="term" value="C:plasma membrane"/>
    <property type="evidence" value="ECO:0007669"/>
    <property type="project" value="UniProtKB-SubCell"/>
</dbReference>
<dbReference type="GO" id="GO:0042302">
    <property type="term" value="F:structural constituent of cuticle"/>
    <property type="evidence" value="ECO:0007669"/>
    <property type="project" value="UniProtKB-KW"/>
</dbReference>
<dbReference type="InterPro" id="IPR056953">
    <property type="entry name" value="CUT_N"/>
</dbReference>
<dbReference type="InterPro" id="IPR051962">
    <property type="entry name" value="Cuticlin"/>
</dbReference>
<dbReference type="InterPro" id="IPR001507">
    <property type="entry name" value="ZP_dom"/>
</dbReference>
<dbReference type="PANTHER" id="PTHR22907:SF51">
    <property type="entry name" value="CUTICLIN-1"/>
    <property type="match status" value="1"/>
</dbReference>
<dbReference type="PANTHER" id="PTHR22907">
    <property type="entry name" value="GH04558P"/>
    <property type="match status" value="1"/>
</dbReference>
<dbReference type="Pfam" id="PF25301">
    <property type="entry name" value="CUT_C"/>
    <property type="match status" value="1"/>
</dbReference>
<dbReference type="Pfam" id="PF25057">
    <property type="entry name" value="CUT_N"/>
    <property type="match status" value="1"/>
</dbReference>
<dbReference type="SMART" id="SM00241">
    <property type="entry name" value="ZP"/>
    <property type="match status" value="1"/>
</dbReference>
<dbReference type="PROSITE" id="PS51034">
    <property type="entry name" value="ZP_2"/>
    <property type="match status" value="1"/>
</dbReference>
<protein>
    <recommendedName>
        <fullName>Cuticlin-1</fullName>
    </recommendedName>
</protein>
<reference key="1">
    <citation type="journal article" date="1991" name="Dev. Biol.">
        <title>cut-1 a Caenorhabditis elegans gene coding for a dauer-specific noncollagenous component of the cuticle.</title>
        <authorList>
            <person name="Sebastiano M."/>
            <person name="Lassandro F."/>
            <person name="Bazzicalupo P."/>
        </authorList>
    </citation>
    <scope>NUCLEOTIDE SEQUENCE [GENOMIC DNA]</scope>
    <scope>FUNCTION</scope>
    <scope>DEVELOPMENTAL STAGE</scope>
    <source>
        <strain>Bristol N2</strain>
    </source>
</reference>
<reference key="2">
    <citation type="journal article" date="1998" name="Science">
        <title>Genome sequence of the nematode C. elegans: a platform for investigating biology.</title>
        <authorList>
            <consortium name="The C. elegans sequencing consortium"/>
        </authorList>
    </citation>
    <scope>NUCLEOTIDE SEQUENCE [LARGE SCALE GENOMIC DNA]</scope>
    <source>
        <strain>Bristol N2</strain>
    </source>
</reference>
<reference key="3">
    <citation type="journal article" date="1994" name="Mol. Biochem. Parasitol.">
        <title>The role of dityrosine formation in the crosslinking of CUT-2, the product of a second cuticlin gene of Caenorhabditis elegans.</title>
        <authorList>
            <person name="Lassandro F."/>
            <person name="Sebastiano M."/>
            <person name="Zei F."/>
            <person name="Bazzicalupo P."/>
        </authorList>
    </citation>
    <scope>FUNCTION</scope>
    <scope>DOMAIN</scope>
    <scope>REGION</scope>
</reference>
<reference key="4">
    <citation type="journal article" date="2005" name="Dev. Biol.">
        <title>The Zona Pellucida domain containing proteins, CUT-1, CUT-3 and CUT-5, play essential roles in the development of the larval alae in Caenorhabditis elegans.</title>
        <authorList>
            <person name="Sapio M.R."/>
            <person name="Hilliard M.A."/>
            <person name="Cermola M."/>
            <person name="Favre R."/>
            <person name="Bazzicalupo P."/>
        </authorList>
    </citation>
    <scope>FUNCTION</scope>
    <scope>SUBCELLULAR LOCATION</scope>
    <scope>DEVELOPMENTAL STAGE</scope>
    <scope>DISRUPTION PHENOTYPE</scope>
</reference>
<reference key="5">
    <citation type="journal article" date="2019" name="Genetics">
        <title>Epidermal Remodeling in Caenorhabditis elegans Dauers Requires the Nidogen Domain Protein DEX-1.</title>
        <authorList>
            <person name="Flatt K.M."/>
            <person name="Beshers C."/>
            <person name="Unal C."/>
            <person name="Cohen J.D."/>
            <person name="Sundaram M.V."/>
            <person name="Schroeder N.E."/>
        </authorList>
    </citation>
    <scope>FUNCTION</scope>
</reference>
<accession>Q03755</accession>
<accession>Q18693</accession>